<sequence>MAALGHTLPFYTGTKPTFPMDTTLAVIITIFLTALVTFIIILPGIRGKTRLFWLLRVVTSLFIGAVILAVNFSSEWSVGHVNANTTYKAFSPKWVSVDVGLQIGLGGVNITLTGTPVQQLNETINYNEAFAWRLGRSYAEEYAKALEKGLPDPVLYLAEKFTPRSPCGLYNQYRLAGHYASAMLWVAFLCWLLANVMLSMPVLVYGGHMLLATGLFQLLALFFFSMTTSLISPCPLRLGTAVLHTHHGPAFWITLATGLLCILLGLVMAVAHRMQPHRLKAFFNQSSEDPVLEWGSEEGGLLSPHYRSIAESPETQDIPMSVASSETCFKEEHPKESDCSL</sequence>
<reference key="1">
    <citation type="journal article" date="2009" name="PLoS Biol.">
        <title>Lineage-specific biology revealed by a finished genome assembly of the mouse.</title>
        <authorList>
            <person name="Church D.M."/>
            <person name="Goodstadt L."/>
            <person name="Hillier L.W."/>
            <person name="Zody M.C."/>
            <person name="Goldstein S."/>
            <person name="She X."/>
            <person name="Bult C.J."/>
            <person name="Agarwala R."/>
            <person name="Cherry J.L."/>
            <person name="DiCuccio M."/>
            <person name="Hlavina W."/>
            <person name="Kapustin Y."/>
            <person name="Meric P."/>
            <person name="Maglott D."/>
            <person name="Birtle Z."/>
            <person name="Marques A.C."/>
            <person name="Graves T."/>
            <person name="Zhou S."/>
            <person name="Teague B."/>
            <person name="Potamousis K."/>
            <person name="Churas C."/>
            <person name="Place M."/>
            <person name="Herschleb J."/>
            <person name="Runnheim R."/>
            <person name="Forrest D."/>
            <person name="Amos-Landgraf J."/>
            <person name="Schwartz D.C."/>
            <person name="Cheng Z."/>
            <person name="Lindblad-Toh K."/>
            <person name="Eichler E.E."/>
            <person name="Ponting C.P."/>
        </authorList>
    </citation>
    <scope>NUCLEOTIDE SEQUENCE [LARGE SCALE GENOMIC DNA]</scope>
    <source>
        <strain>C57BL/6J</strain>
    </source>
</reference>
<reference key="2">
    <citation type="journal article" date="2004" name="Genome Res.">
        <title>The status, quality, and expansion of the NIH full-length cDNA project: the Mammalian Gene Collection (MGC).</title>
        <authorList>
            <consortium name="The MGC Project Team"/>
        </authorList>
    </citation>
    <scope>NUCLEOTIDE SEQUENCE [LARGE SCALE MRNA]</scope>
    <source>
        <strain>FVB/N</strain>
        <tissue>Mammary tumor</tissue>
    </source>
</reference>
<comment type="function">
    <text evidence="1">May be required for the maturation and the transport from the endoplasmic reticulum to the plasma membrane of functional DUOX1.</text>
</comment>
<comment type="subunit">
    <text evidence="1">May interact with NUMB.</text>
</comment>
<comment type="subcellular location">
    <subcellularLocation>
        <location evidence="3">Membrane</location>
        <topology evidence="3">Multi-pass membrane protein</topology>
    </subcellularLocation>
</comment>
<comment type="similarity">
    <text evidence="3">Belongs to the DUOXA family.</text>
</comment>
<accession>Q8VE49</accession>
<accession>A2AQ97</accession>
<name>DOXA1_MOUSE</name>
<organism>
    <name type="scientific">Mus musculus</name>
    <name type="common">Mouse</name>
    <dbReference type="NCBI Taxonomy" id="10090"/>
    <lineage>
        <taxon>Eukaryota</taxon>
        <taxon>Metazoa</taxon>
        <taxon>Chordata</taxon>
        <taxon>Craniata</taxon>
        <taxon>Vertebrata</taxon>
        <taxon>Euteleostomi</taxon>
        <taxon>Mammalia</taxon>
        <taxon>Eutheria</taxon>
        <taxon>Euarchontoglires</taxon>
        <taxon>Glires</taxon>
        <taxon>Rodentia</taxon>
        <taxon>Myomorpha</taxon>
        <taxon>Muroidea</taxon>
        <taxon>Muridae</taxon>
        <taxon>Murinae</taxon>
        <taxon>Mus</taxon>
        <taxon>Mus</taxon>
    </lineage>
</organism>
<protein>
    <recommendedName>
        <fullName>Dual oxidase maturation factor 1</fullName>
    </recommendedName>
    <alternativeName>
        <fullName>Dual oxidase activator 1</fullName>
    </alternativeName>
</protein>
<dbReference type="EMBL" id="AL844566">
    <property type="status" value="NOT_ANNOTATED_CDS"/>
    <property type="molecule type" value="Genomic_DNA"/>
</dbReference>
<dbReference type="EMBL" id="BC019755">
    <property type="protein sequence ID" value="AAH19755.1"/>
    <property type="molecule type" value="mRNA"/>
</dbReference>
<dbReference type="CCDS" id="CCDS16661.1"/>
<dbReference type="RefSeq" id="NP_001292191.1">
    <property type="nucleotide sequence ID" value="NM_001305262.1"/>
</dbReference>
<dbReference type="RefSeq" id="XP_006499154.1">
    <property type="nucleotide sequence ID" value="XM_006499091.5"/>
</dbReference>
<dbReference type="RefSeq" id="XP_006499157.1">
    <property type="nucleotide sequence ID" value="XM_006499094.5"/>
</dbReference>
<dbReference type="RefSeq" id="XP_006499158.1">
    <property type="nucleotide sequence ID" value="XM_006499095.5"/>
</dbReference>
<dbReference type="RefSeq" id="XP_017172410.1">
    <property type="nucleotide sequence ID" value="XM_017316921.3"/>
</dbReference>
<dbReference type="PDB" id="6WXR">
    <property type="method" value="EM"/>
    <property type="resolution" value="3.20 A"/>
    <property type="chains" value="B=1-341"/>
</dbReference>
<dbReference type="PDB" id="6WXU">
    <property type="method" value="EM"/>
    <property type="resolution" value="2.70 A"/>
    <property type="chains" value="B/D=1-341"/>
</dbReference>
<dbReference type="PDB" id="6WXV">
    <property type="method" value="EM"/>
    <property type="resolution" value="3.30 A"/>
    <property type="chains" value="B=1-341"/>
</dbReference>
<dbReference type="PDBsum" id="6WXR"/>
<dbReference type="PDBsum" id="6WXU"/>
<dbReference type="PDBsum" id="6WXV"/>
<dbReference type="EMDB" id="EMD-21962"/>
<dbReference type="EMDB" id="EMD-21963"/>
<dbReference type="EMDB" id="EMD-21964"/>
<dbReference type="SMR" id="Q8VE49"/>
<dbReference type="CORUM" id="Q8VE49"/>
<dbReference type="FunCoup" id="Q8VE49">
    <property type="interactions" value="137"/>
</dbReference>
<dbReference type="STRING" id="10090.ENSMUSP00000106166"/>
<dbReference type="GlyCosmos" id="Q8VE49">
    <property type="glycosylation" value="3 sites, No reported glycans"/>
</dbReference>
<dbReference type="GlyGen" id="Q8VE49">
    <property type="glycosylation" value="3 sites"/>
</dbReference>
<dbReference type="PhosphoSitePlus" id="Q8VE49"/>
<dbReference type="PaxDb" id="10090-ENSMUSP00000106166"/>
<dbReference type="ProteomicsDB" id="277374"/>
<dbReference type="Antibodypedia" id="24331">
    <property type="antibodies" value="78 antibodies from 13 providers"/>
</dbReference>
<dbReference type="DNASU" id="213696"/>
<dbReference type="Ensembl" id="ENSMUST00000028653.14">
    <property type="protein sequence ID" value="ENSMUSP00000028653.8"/>
    <property type="gene ID" value="ENSMUSG00000027224.15"/>
</dbReference>
<dbReference type="Ensembl" id="ENSMUST00000110537.8">
    <property type="protein sequence ID" value="ENSMUSP00000106166.2"/>
    <property type="gene ID" value="ENSMUSG00000027224.15"/>
</dbReference>
<dbReference type="GeneID" id="213696"/>
<dbReference type="KEGG" id="mmu:213696"/>
<dbReference type="UCSC" id="uc008man.1">
    <property type="organism name" value="mouse"/>
</dbReference>
<dbReference type="AGR" id="MGI:2384861"/>
<dbReference type="CTD" id="90527"/>
<dbReference type="MGI" id="MGI:2384861">
    <property type="gene designation" value="Duoxa1"/>
</dbReference>
<dbReference type="VEuPathDB" id="HostDB:ENSMUSG00000027224"/>
<dbReference type="eggNOG" id="KOG3921">
    <property type="taxonomic scope" value="Eukaryota"/>
</dbReference>
<dbReference type="GeneTree" id="ENSGT00390000008240"/>
<dbReference type="HOGENOM" id="CLU_045258_0_0_1"/>
<dbReference type="InParanoid" id="Q8VE49"/>
<dbReference type="OMA" id="MHAFVIF"/>
<dbReference type="OrthoDB" id="10042652at2759"/>
<dbReference type="PhylomeDB" id="Q8VE49"/>
<dbReference type="TreeFam" id="TF312996"/>
<dbReference type="BioGRID-ORCS" id="213696">
    <property type="hits" value="2 hits in 61 CRISPR screens"/>
</dbReference>
<dbReference type="PRO" id="PR:Q8VE49"/>
<dbReference type="Proteomes" id="UP000000589">
    <property type="component" value="Chromosome 2"/>
</dbReference>
<dbReference type="RNAct" id="Q8VE49">
    <property type="molecule type" value="protein"/>
</dbReference>
<dbReference type="Bgee" id="ENSMUSG00000027224">
    <property type="expression patterns" value="Expressed in urinary bladder urothelium and 50 other cell types or tissues"/>
</dbReference>
<dbReference type="ExpressionAtlas" id="Q8VE49">
    <property type="expression patterns" value="baseline and differential"/>
</dbReference>
<dbReference type="GO" id="GO:0005789">
    <property type="term" value="C:endoplasmic reticulum membrane"/>
    <property type="evidence" value="ECO:0007669"/>
    <property type="project" value="InterPro"/>
</dbReference>
<dbReference type="GO" id="GO:0005886">
    <property type="term" value="C:plasma membrane"/>
    <property type="evidence" value="ECO:0000314"/>
    <property type="project" value="MGI"/>
</dbReference>
<dbReference type="GO" id="GO:0042743">
    <property type="term" value="P:hydrogen peroxide metabolic process"/>
    <property type="evidence" value="ECO:0000316"/>
    <property type="project" value="MGI"/>
</dbReference>
<dbReference type="GO" id="GO:0010729">
    <property type="term" value="P:positive regulation of hydrogen peroxide biosynthetic process"/>
    <property type="evidence" value="ECO:0000250"/>
    <property type="project" value="UniProtKB"/>
</dbReference>
<dbReference type="GO" id="GO:0045666">
    <property type="term" value="P:positive regulation of neuron differentiation"/>
    <property type="evidence" value="ECO:0000314"/>
    <property type="project" value="MGI"/>
</dbReference>
<dbReference type="GO" id="GO:2000379">
    <property type="term" value="P:positive regulation of reactive oxygen species metabolic process"/>
    <property type="evidence" value="ECO:0000316"/>
    <property type="project" value="MGI"/>
</dbReference>
<dbReference type="GO" id="GO:0015031">
    <property type="term" value="P:protein transport"/>
    <property type="evidence" value="ECO:0007669"/>
    <property type="project" value="UniProtKB-KW"/>
</dbReference>
<dbReference type="GO" id="GO:0050727">
    <property type="term" value="P:regulation of inflammatory response"/>
    <property type="evidence" value="ECO:0000316"/>
    <property type="project" value="MGI"/>
</dbReference>
<dbReference type="GO" id="GO:2000609">
    <property type="term" value="P:regulation of thyroid hormone generation"/>
    <property type="evidence" value="ECO:0000316"/>
    <property type="project" value="MGI"/>
</dbReference>
<dbReference type="InterPro" id="IPR018469">
    <property type="entry name" value="Dual_oxidase_maturation_fac"/>
</dbReference>
<dbReference type="PANTHER" id="PTHR31158">
    <property type="entry name" value="DUAL OXIDASE 2"/>
    <property type="match status" value="1"/>
</dbReference>
<dbReference type="PANTHER" id="PTHR31158:SF3">
    <property type="entry name" value="DUAL OXIDASE MATURATION FACTOR 1"/>
    <property type="match status" value="1"/>
</dbReference>
<dbReference type="Pfam" id="PF10204">
    <property type="entry name" value="DuoxA"/>
    <property type="match status" value="1"/>
</dbReference>
<evidence type="ECO:0000250" key="1"/>
<evidence type="ECO:0000255" key="2"/>
<evidence type="ECO:0000305" key="3"/>
<evidence type="ECO:0007829" key="4">
    <source>
        <dbReference type="PDB" id="6WXU"/>
    </source>
</evidence>
<evidence type="ECO:0007829" key="5">
    <source>
        <dbReference type="PDB" id="6WXV"/>
    </source>
</evidence>
<keyword id="KW-0002">3D-structure</keyword>
<keyword id="KW-0325">Glycoprotein</keyword>
<keyword id="KW-0472">Membrane</keyword>
<keyword id="KW-0653">Protein transport</keyword>
<keyword id="KW-1185">Reference proteome</keyword>
<keyword id="KW-0812">Transmembrane</keyword>
<keyword id="KW-1133">Transmembrane helix</keyword>
<keyword id="KW-0813">Transport</keyword>
<feature type="chain" id="PRO_0000264242" description="Dual oxidase maturation factor 1">
    <location>
        <begin position="1"/>
        <end position="341"/>
    </location>
</feature>
<feature type="topological domain" description="Extracellular" evidence="2">
    <location>
        <begin position="1"/>
        <end position="24"/>
    </location>
</feature>
<feature type="transmembrane region" description="Helical" evidence="2">
    <location>
        <begin position="25"/>
        <end position="45"/>
    </location>
</feature>
<feature type="topological domain" description="Cytoplasmic" evidence="2">
    <location>
        <begin position="46"/>
        <end position="51"/>
    </location>
</feature>
<feature type="transmembrane region" description="Helical" evidence="2">
    <location>
        <begin position="52"/>
        <end position="72"/>
    </location>
</feature>
<feature type="topological domain" description="Extracellular" evidence="2">
    <location>
        <begin position="73"/>
        <end position="183"/>
    </location>
</feature>
<feature type="transmembrane region" description="Helical" evidence="2">
    <location>
        <begin position="184"/>
        <end position="204"/>
    </location>
</feature>
<feature type="topological domain" description="Cytoplasmic" evidence="2">
    <location>
        <position position="205"/>
    </location>
</feature>
<feature type="transmembrane region" description="Helical" evidence="2">
    <location>
        <begin position="206"/>
        <end position="226"/>
    </location>
</feature>
<feature type="topological domain" description="Extracellular" evidence="2">
    <location>
        <begin position="227"/>
        <end position="249"/>
    </location>
</feature>
<feature type="transmembrane region" description="Helical" evidence="2">
    <location>
        <begin position="250"/>
        <end position="270"/>
    </location>
</feature>
<feature type="topological domain" description="Cytoplasmic" evidence="2">
    <location>
        <begin position="271"/>
        <end position="341"/>
    </location>
</feature>
<feature type="glycosylation site" description="N-linked (GlcNAc...) asparagine" evidence="2">
    <location>
        <position position="84"/>
    </location>
</feature>
<feature type="glycosylation site" description="N-linked (GlcNAc...) asparagine" evidence="2">
    <location>
        <position position="109"/>
    </location>
</feature>
<feature type="glycosylation site" description="N-linked (GlcNAc...) asparagine" evidence="2">
    <location>
        <position position="121"/>
    </location>
</feature>
<feature type="sequence conflict" description="In Ref. 2; AAH19755." evidence="3" ref="2">
    <original>L</original>
    <variation>F</variation>
    <location>
        <position position="112"/>
    </location>
</feature>
<feature type="sequence conflict" description="In Ref. 2; AAH19755." evidence="3" ref="2">
    <original>Q</original>
    <variation>L</variation>
    <location>
        <position position="285"/>
    </location>
</feature>
<feature type="sequence conflict" description="In Ref. 2; AAH19755." evidence="3" ref="2">
    <original>I</original>
    <variation>T</variation>
    <location>
        <position position="318"/>
    </location>
</feature>
<feature type="strand" evidence="4">
    <location>
        <begin position="7"/>
        <end position="11"/>
    </location>
</feature>
<feature type="helix" evidence="4">
    <location>
        <begin position="22"/>
        <end position="41"/>
    </location>
</feature>
<feature type="helix" evidence="4">
    <location>
        <begin position="42"/>
        <end position="44"/>
    </location>
</feature>
<feature type="helix" evidence="4">
    <location>
        <begin position="50"/>
        <end position="72"/>
    </location>
</feature>
<feature type="strand" evidence="4">
    <location>
        <begin position="76"/>
        <end position="86"/>
    </location>
</feature>
<feature type="strand" evidence="4">
    <location>
        <begin position="94"/>
        <end position="103"/>
    </location>
</feature>
<feature type="strand" evidence="4">
    <location>
        <begin position="108"/>
        <end position="111"/>
    </location>
</feature>
<feature type="strand" evidence="4">
    <location>
        <begin position="113"/>
        <end position="117"/>
    </location>
</feature>
<feature type="strand" evidence="4">
    <location>
        <begin position="119"/>
        <end position="122"/>
    </location>
</feature>
<feature type="strand" evidence="4">
    <location>
        <begin position="128"/>
        <end position="130"/>
    </location>
</feature>
<feature type="strand" evidence="5">
    <location>
        <begin position="133"/>
        <end position="136"/>
    </location>
</feature>
<feature type="helix" evidence="4">
    <location>
        <begin position="138"/>
        <end position="147"/>
    </location>
</feature>
<feature type="helix" evidence="4">
    <location>
        <begin position="152"/>
        <end position="159"/>
    </location>
</feature>
<feature type="strand" evidence="4">
    <location>
        <begin position="162"/>
        <end position="164"/>
    </location>
</feature>
<feature type="helix" evidence="4">
    <location>
        <begin position="170"/>
        <end position="199"/>
    </location>
</feature>
<feature type="helix" evidence="4">
    <location>
        <begin position="203"/>
        <end position="224"/>
    </location>
</feature>
<feature type="helix" evidence="4">
    <location>
        <begin position="228"/>
        <end position="231"/>
    </location>
</feature>
<feature type="strand" evidence="4">
    <location>
        <begin position="245"/>
        <end position="247"/>
    </location>
</feature>
<feature type="helix" evidence="4">
    <location>
        <begin position="249"/>
        <end position="273"/>
    </location>
</feature>
<gene>
    <name type="primary">Duoxa1</name>
</gene>
<proteinExistence type="evidence at protein level"/>